<gene>
    <name type="primary">OPG148</name>
    <name type="ORF">A20R</name>
    <name type="ORF">A21R</name>
</gene>
<feature type="chain" id="PRO_0000099269" description="DNA polymerase processivity factor component OPG148">
    <location>
        <begin position="1"/>
        <end position="426"/>
    </location>
</feature>
<dbReference type="EMBL" id="X69198">
    <property type="protein sequence ID" value="CAA49065.1"/>
    <property type="molecule type" value="Genomic_DNA"/>
</dbReference>
<dbReference type="PIR" id="C36850">
    <property type="entry name" value="C36850"/>
</dbReference>
<dbReference type="RefSeq" id="NP_042169.1">
    <property type="nucleotide sequence ID" value="NC_001611.1"/>
</dbReference>
<dbReference type="SMR" id="P0DTP6"/>
<dbReference type="GeneID" id="1486497"/>
<dbReference type="KEGG" id="vg:1486497"/>
<dbReference type="Proteomes" id="UP000002060">
    <property type="component" value="Segment"/>
</dbReference>
<dbReference type="GO" id="GO:0006260">
    <property type="term" value="P:DNA replication"/>
    <property type="evidence" value="ECO:0007669"/>
    <property type="project" value="UniProtKB-KW"/>
</dbReference>
<dbReference type="Gene3D" id="6.10.140.1880">
    <property type="match status" value="1"/>
</dbReference>
<dbReference type="InterPro" id="IPR010267">
    <property type="entry name" value="Chordopox_A20R"/>
</dbReference>
<dbReference type="Pfam" id="PF05941">
    <property type="entry name" value="Chordopox_A20R"/>
    <property type="match status" value="1"/>
</dbReference>
<proteinExistence type="inferred from homology"/>
<accession>P0DTP6</accession>
<accession>P33843</accession>
<keyword id="KW-0235">DNA replication</keyword>
<keyword id="KW-0597">Phosphoprotein</keyword>
<keyword id="KW-1185">Reference proteome</keyword>
<name>PG148_VAR67</name>
<comment type="function">
    <text evidence="1">Plays an essential role in viral DNA replication by acting as the polymerase processivity factor together with protein OPG116. Serves as a bridge which links the DNA polymerase OPG071 and the uracil DNA glycosylase.</text>
</comment>
<comment type="subunit">
    <text evidence="1">Interacts with the DNA polymerase catalytic subunit OPG071. Interacts with UDG/OPG116. Component of the uracil-DNA glycosylase(UDG)-OPG148-polymerase complex; OPG148 and UDG form a heterodimeric processivity factor that associates with OPG071 to form the processive polymerase holoenzyme. Interacts with OPG117.</text>
</comment>
<comment type="similarity">
    <text evidence="2">Belongs to the orthopoxvirus OPG148 family.</text>
</comment>
<sequence>MTSSADLTNLKELLSLYKSLRFSDSAAIEKYNSLVEWGTSTYWKIGVQKVANVETSISDYYDEVKNKPFNIDPGYYIFLPVYFGSVFIYSKGKNMVELGSGNSFQIPDDMRSVCNKVLDGDNGIDFLRFVLLNNRWIMEDAISKYQSPVNIFKLASEYGLNIPNYLEIEIEEDTLFDDELYSIIERSFDDNFPKISISYIKLGELRRQVVDFFKFSFMYIESIKVDRIGDNIFIPSVITKSGKKILVKDVDHLIRSKVREHTFVKVKKKNTFSILYDYDGNGTETRGEVIKRIIDTIGRDYYVNGKYFSKVGSAGLKQLTNKLNINECTTVDELVDEINKSGTVKRKIKTQSAFDLSRECLGYPEADFITLVNNMRFKIENCKVVNFNIENTNCLNNPSIETIYGNFNQFVSIFNIVTDVKKRLFE</sequence>
<organism>
    <name type="scientific">Variola virus (isolate Human/India/Ind3/1967)</name>
    <name type="common">VARV</name>
    <name type="synonym">Smallpox virus</name>
    <dbReference type="NCBI Taxonomy" id="587200"/>
    <lineage>
        <taxon>Viruses</taxon>
        <taxon>Varidnaviria</taxon>
        <taxon>Bamfordvirae</taxon>
        <taxon>Nucleocytoviricota</taxon>
        <taxon>Pokkesviricetes</taxon>
        <taxon>Chitovirales</taxon>
        <taxon>Poxviridae</taxon>
        <taxon>Chordopoxvirinae</taxon>
        <taxon>Orthopoxvirus</taxon>
        <taxon>Variola virus</taxon>
    </lineage>
</organism>
<evidence type="ECO:0000250" key="1">
    <source>
        <dbReference type="UniProtKB" id="P68710"/>
    </source>
</evidence>
<evidence type="ECO:0000305" key="2"/>
<organismHost>
    <name type="scientific">Homo sapiens</name>
    <name type="common">Human</name>
    <dbReference type="NCBI Taxonomy" id="9606"/>
</organismHost>
<reference key="1">
    <citation type="journal article" date="1993" name="FEBS Lett.">
        <title>Genes of variola and vaccinia viruses necessary to overcome the host protective mechanisms.</title>
        <authorList>
            <person name="Shchelkunov S.N."/>
            <person name="Blinov V.M."/>
            <person name="Sandakhchiev L.S."/>
        </authorList>
    </citation>
    <scope>NUCLEOTIDE SEQUENCE [GENOMIC DNA]</scope>
</reference>
<protein>
    <recommendedName>
        <fullName>DNA polymerase processivity factor component OPG148</fullName>
    </recommendedName>
</protein>